<keyword id="KW-0002">3D-structure</keyword>
<keyword id="KW-0007">Acetylation</keyword>
<keyword id="KW-0025">Alternative splicing</keyword>
<keyword id="KW-0131">Cell cycle</keyword>
<keyword id="KW-0132">Cell division</keyword>
<keyword id="KW-0965">Cell junction</keyword>
<keyword id="KW-0963">Cytoplasm</keyword>
<keyword id="KW-0206">Cytoskeleton</keyword>
<keyword id="KW-0221">Differentiation</keyword>
<keyword id="KW-0344">Guanine-nucleotide releasing factor</keyword>
<keyword id="KW-1017">Isopeptide bond</keyword>
<keyword id="KW-0524">Neurogenesis</keyword>
<keyword id="KW-0539">Nucleus</keyword>
<keyword id="KW-0597">Phosphoprotein</keyword>
<keyword id="KW-0653">Protein transport</keyword>
<keyword id="KW-0656">Proto-oncogene</keyword>
<keyword id="KW-1185">Reference proteome</keyword>
<keyword id="KW-0677">Repeat</keyword>
<keyword id="KW-0796">Tight junction</keyword>
<keyword id="KW-0813">Transport</keyword>
<keyword id="KW-0832">Ubl conjugation</keyword>
<feature type="initiator methionine" description="Removed" evidence="2">
    <location>
        <position position="1"/>
    </location>
</feature>
<feature type="chain" id="PRO_0000080939" description="Protein ECT2">
    <location>
        <begin position="2"/>
        <end position="913"/>
    </location>
</feature>
<feature type="domain" description="BRCT 1" evidence="3">
    <location>
        <begin position="176"/>
        <end position="260"/>
    </location>
</feature>
<feature type="domain" description="BRCT 2" evidence="3">
    <location>
        <begin position="266"/>
        <end position="354"/>
    </location>
</feature>
<feature type="domain" description="DH" evidence="4">
    <location>
        <begin position="452"/>
        <end position="641"/>
    </location>
</feature>
<feature type="domain" description="PH">
    <location>
        <begin position="675"/>
        <end position="794"/>
    </location>
</feature>
<feature type="region of interest" description="Disordered" evidence="5">
    <location>
        <begin position="389"/>
        <end position="415"/>
    </location>
</feature>
<feature type="region of interest" description="Disordered" evidence="5">
    <location>
        <begin position="427"/>
        <end position="450"/>
    </location>
</feature>
<feature type="region of interest" description="Disordered" evidence="5">
    <location>
        <begin position="853"/>
        <end position="874"/>
    </location>
</feature>
<feature type="short sequence motif" description="Nuclear localization signal" evidence="1">
    <location>
        <begin position="378"/>
        <end position="382"/>
    </location>
</feature>
<feature type="short sequence motif" description="Nuclear localization signal" evidence="1">
    <location>
        <begin position="401"/>
        <end position="405"/>
    </location>
</feature>
<feature type="compositionally biased region" description="Low complexity" evidence="5">
    <location>
        <begin position="856"/>
        <end position="870"/>
    </location>
</feature>
<feature type="modified residue" description="N-acetylalanine" evidence="2">
    <location>
        <position position="2"/>
    </location>
</feature>
<feature type="modified residue" description="Phosphothreonine; by PKC/PRKCI" evidence="2">
    <location>
        <position position="359"/>
    </location>
</feature>
<feature type="modified residue" description="Phosphoserine" evidence="2">
    <location>
        <position position="367"/>
    </location>
</feature>
<feature type="modified residue" description="Phosphoserine" evidence="2">
    <location>
        <position position="370"/>
    </location>
</feature>
<feature type="modified residue" description="Phosphothreonine" evidence="13">
    <location>
        <position position="373"/>
    </location>
</feature>
<feature type="modified residue" description="Phosphoserine" evidence="13">
    <location>
        <position position="376"/>
    </location>
</feature>
<feature type="modified residue" description="Phosphothreonine; by CDK1" evidence="2">
    <location>
        <position position="444"/>
    </location>
</feature>
<feature type="modified residue" description="Phosphoserine" evidence="2">
    <location>
        <position position="716"/>
    </location>
</feature>
<feature type="modified residue" description="Phosphoserine" evidence="2">
    <location>
        <position position="842"/>
    </location>
</feature>
<feature type="modified residue" description="Phosphothreonine; by CDK1" evidence="2">
    <location>
        <position position="846"/>
    </location>
</feature>
<feature type="modified residue" description="Phosphoserine" evidence="2">
    <location>
        <position position="861"/>
    </location>
</feature>
<feature type="modified residue" description="Phosphoserine" evidence="2">
    <location>
        <position position="865"/>
    </location>
</feature>
<feature type="cross-link" description="Glycyl lysine isopeptide (Lys-Gly) (interchain with G-Cter in SUMO2)" evidence="2">
    <location>
        <position position="611"/>
    </location>
</feature>
<feature type="splice variant" id="VSP_041979" description="In isoform 3." evidence="10">
    <original>VEAR</original>
    <variation>LKQE</variation>
    <location>
        <begin position="49"/>
        <end position="52"/>
    </location>
</feature>
<feature type="splice variant" id="VSP_041980" description="In isoform 3." evidence="10">
    <location>
        <begin position="53"/>
        <end position="913"/>
    </location>
</feature>
<feature type="splice variant" id="VSP_041981" description="In isoform 2." evidence="8 9 11">
    <location>
        <begin position="71"/>
        <end position="101"/>
    </location>
</feature>
<feature type="sequence conflict" description="In Ref. 7; AAH32155." evidence="12" ref="7">
    <original>S</original>
    <variation>T</variation>
    <location>
        <position position="11"/>
    </location>
</feature>
<feature type="sequence conflict" description="In Ref. 7; AAH32155." evidence="12" ref="7">
    <original>E</original>
    <variation>G</variation>
    <location>
        <position position="28"/>
    </location>
</feature>
<feature type="sequence conflict" description="In Ref. 7; AAH23881." evidence="12" ref="7">
    <original>R</original>
    <variation>S</variation>
    <location>
        <position position="147"/>
    </location>
</feature>
<feature type="sequence conflict" description="In Ref. 7; AAH45614." evidence="12" ref="7">
    <original>E</original>
    <variation>K</variation>
    <location>
        <position position="555"/>
    </location>
</feature>
<feature type="sequence conflict" description="In Ref. 7; AAH32155." evidence="12" ref="7">
    <original>L</original>
    <variation>V</variation>
    <location>
        <position position="872"/>
    </location>
</feature>
<feature type="turn" evidence="14">
    <location>
        <begin position="270"/>
        <end position="273"/>
    </location>
</feature>
<feature type="strand" evidence="14">
    <location>
        <begin position="275"/>
        <end position="281"/>
    </location>
</feature>
<feature type="helix" evidence="14">
    <location>
        <begin position="283"/>
        <end position="296"/>
    </location>
</feature>
<feature type="strand" evidence="14">
    <location>
        <begin position="309"/>
        <end position="313"/>
    </location>
</feature>
<feature type="turn" evidence="14">
    <location>
        <begin position="315"/>
        <end position="317"/>
    </location>
</feature>
<feature type="strand" evidence="14">
    <location>
        <begin position="329"/>
        <end position="332"/>
    </location>
</feature>
<feature type="helix" evidence="14">
    <location>
        <begin position="334"/>
        <end position="342"/>
    </location>
</feature>
<feature type="helix" evidence="14">
    <location>
        <begin position="349"/>
        <end position="351"/>
    </location>
</feature>
<proteinExistence type="evidence at protein level"/>
<evidence type="ECO:0000250" key="1"/>
<evidence type="ECO:0000250" key="2">
    <source>
        <dbReference type="UniProtKB" id="Q9H8V3"/>
    </source>
</evidence>
<evidence type="ECO:0000255" key="3">
    <source>
        <dbReference type="PROSITE-ProRule" id="PRU00033"/>
    </source>
</evidence>
<evidence type="ECO:0000255" key="4">
    <source>
        <dbReference type="PROSITE-ProRule" id="PRU00062"/>
    </source>
</evidence>
<evidence type="ECO:0000256" key="5">
    <source>
        <dbReference type="SAM" id="MobiDB-lite"/>
    </source>
</evidence>
<evidence type="ECO:0000269" key="6">
    <source>
    </source>
</evidence>
<evidence type="ECO:0000269" key="7">
    <source>
    </source>
</evidence>
<evidence type="ECO:0000303" key="8">
    <source>
    </source>
</evidence>
<evidence type="ECO:0000303" key="9">
    <source>
    </source>
</evidence>
<evidence type="ECO:0000303" key="10">
    <source>
    </source>
</evidence>
<evidence type="ECO:0000303" key="11">
    <source ref="4"/>
</evidence>
<evidence type="ECO:0000305" key="12"/>
<evidence type="ECO:0007744" key="13">
    <source>
    </source>
</evidence>
<evidence type="ECO:0007829" key="14">
    <source>
        <dbReference type="PDB" id="2COU"/>
    </source>
</evidence>
<dbReference type="EMBL" id="L11316">
    <property type="protein sequence ID" value="AAA37536.1"/>
    <property type="status" value="ALT_SEQ"/>
    <property type="molecule type" value="mRNA"/>
</dbReference>
<dbReference type="EMBL" id="AK157718">
    <property type="protein sequence ID" value="BAE34166.1"/>
    <property type="molecule type" value="mRNA"/>
</dbReference>
<dbReference type="EMBL" id="AK220452">
    <property type="protein sequence ID" value="BAD90277.1"/>
    <property type="molecule type" value="mRNA"/>
</dbReference>
<dbReference type="EMBL" id="AC121099">
    <property type="status" value="NOT_ANNOTATED_CDS"/>
    <property type="molecule type" value="Genomic_DNA"/>
</dbReference>
<dbReference type="EMBL" id="AC165280">
    <property type="status" value="NOT_ANNOTATED_CDS"/>
    <property type="molecule type" value="Genomic_DNA"/>
</dbReference>
<dbReference type="EMBL" id="CH466530">
    <property type="protein sequence ID" value="EDL34919.1"/>
    <property type="molecule type" value="Genomic_DNA"/>
</dbReference>
<dbReference type="EMBL" id="CH466530">
    <property type="protein sequence ID" value="EDL34920.1"/>
    <property type="molecule type" value="Genomic_DNA"/>
</dbReference>
<dbReference type="EMBL" id="BC023881">
    <property type="protein sequence ID" value="AAH23881.1"/>
    <property type="molecule type" value="mRNA"/>
</dbReference>
<dbReference type="EMBL" id="BC025565">
    <property type="protein sequence ID" value="AAH25565.1"/>
    <property type="molecule type" value="mRNA"/>
</dbReference>
<dbReference type="EMBL" id="BC032155">
    <property type="protein sequence ID" value="AAH32155.1"/>
    <property type="molecule type" value="mRNA"/>
</dbReference>
<dbReference type="EMBL" id="BC045614">
    <property type="protein sequence ID" value="AAH45614.1"/>
    <property type="molecule type" value="mRNA"/>
</dbReference>
<dbReference type="CCDS" id="CCDS17270.2">
    <molecule id="Q07139-1"/>
</dbReference>
<dbReference type="CCDS" id="CCDS50875.1">
    <molecule id="Q07139-2"/>
</dbReference>
<dbReference type="PIR" id="S32372">
    <property type="entry name" value="S32372"/>
</dbReference>
<dbReference type="RefSeq" id="NP_001171096.1">
    <molecule id="Q07139-2"/>
    <property type="nucleotide sequence ID" value="NM_001177625.2"/>
</dbReference>
<dbReference type="RefSeq" id="NP_001171097.1">
    <molecule id="Q07139-2"/>
    <property type="nucleotide sequence ID" value="NM_001177626.2"/>
</dbReference>
<dbReference type="RefSeq" id="NP_001396633.1">
    <molecule id="Q07139-1"/>
    <property type="nucleotide sequence ID" value="NM_001409704.1"/>
</dbReference>
<dbReference type="RefSeq" id="NP_001396634.1">
    <molecule id="Q07139-1"/>
    <property type="nucleotide sequence ID" value="NM_001409705.1"/>
</dbReference>
<dbReference type="RefSeq" id="NP_001396635.1">
    <molecule id="Q07139-1"/>
    <property type="nucleotide sequence ID" value="NM_001409706.1"/>
</dbReference>
<dbReference type="RefSeq" id="NP_001396637.1">
    <molecule id="Q07139-1"/>
    <property type="nucleotide sequence ID" value="NM_001409708.1"/>
</dbReference>
<dbReference type="RefSeq" id="NP_001396642.1">
    <molecule id="Q07139-2"/>
    <property type="nucleotide sequence ID" value="NM_001409713.1"/>
</dbReference>
<dbReference type="RefSeq" id="NP_031926.2">
    <molecule id="Q07139-1"/>
    <property type="nucleotide sequence ID" value="NM_007900.4"/>
</dbReference>
<dbReference type="RefSeq" id="XP_006535448.1">
    <property type="nucleotide sequence ID" value="XM_006535385.3"/>
</dbReference>
<dbReference type="RefSeq" id="XP_006535449.1">
    <property type="nucleotide sequence ID" value="XM_006535386.3"/>
</dbReference>
<dbReference type="PDB" id="2COU">
    <property type="method" value="NMR"/>
    <property type="chains" value="A=266-361"/>
</dbReference>
<dbReference type="PDBsum" id="2COU"/>
<dbReference type="SMR" id="Q07139"/>
<dbReference type="BioGRID" id="199370">
    <property type="interactions" value="48"/>
</dbReference>
<dbReference type="FunCoup" id="Q07139">
    <property type="interactions" value="1454"/>
</dbReference>
<dbReference type="IntAct" id="Q07139">
    <property type="interactions" value="27"/>
</dbReference>
<dbReference type="STRING" id="10090.ENSMUSP00000103935"/>
<dbReference type="iPTMnet" id="Q07139"/>
<dbReference type="PhosphoSitePlus" id="Q07139"/>
<dbReference type="jPOST" id="Q07139"/>
<dbReference type="PaxDb" id="10090-ENSMUSP00000103935"/>
<dbReference type="PeptideAtlas" id="Q07139"/>
<dbReference type="ProteomicsDB" id="277440">
    <molecule id="Q07139-1"/>
</dbReference>
<dbReference type="ProteomicsDB" id="277441">
    <molecule id="Q07139-2"/>
</dbReference>
<dbReference type="Pumba" id="Q07139"/>
<dbReference type="Antibodypedia" id="33733">
    <property type="antibodies" value="365 antibodies from 31 providers"/>
</dbReference>
<dbReference type="DNASU" id="13605"/>
<dbReference type="Ensembl" id="ENSMUST00000108298.9">
    <molecule id="Q07139-2"/>
    <property type="protein sequence ID" value="ENSMUSP00000103933.3"/>
    <property type="gene ID" value="ENSMUSG00000027699.20"/>
</dbReference>
<dbReference type="Ensembl" id="ENSMUST00000108300.8">
    <molecule id="Q07139-1"/>
    <property type="protein sequence ID" value="ENSMUSP00000103935.2"/>
    <property type="gene ID" value="ENSMUSG00000027699.20"/>
</dbReference>
<dbReference type="Ensembl" id="ENSMUST00000176242.9">
    <molecule id="Q07139-2"/>
    <property type="protein sequence ID" value="ENSMUSP00000135740.3"/>
    <property type="gene ID" value="ENSMUSG00000027699.20"/>
</dbReference>
<dbReference type="GeneID" id="13605"/>
<dbReference type="KEGG" id="mmu:13605"/>
<dbReference type="UCSC" id="uc008oth.2">
    <molecule id="Q07139-1"/>
    <property type="organism name" value="mouse"/>
</dbReference>
<dbReference type="UCSC" id="uc008oti.2">
    <molecule id="Q07139-2"/>
    <property type="organism name" value="mouse"/>
</dbReference>
<dbReference type="AGR" id="MGI:95281"/>
<dbReference type="CTD" id="1894"/>
<dbReference type="MGI" id="MGI:95281">
    <property type="gene designation" value="Ect2"/>
</dbReference>
<dbReference type="VEuPathDB" id="HostDB:ENSMUSG00000027699"/>
<dbReference type="eggNOG" id="KOG3524">
    <property type="taxonomic scope" value="Eukaryota"/>
</dbReference>
<dbReference type="GeneTree" id="ENSGT00940000156299"/>
<dbReference type="HOGENOM" id="CLU_008187_0_0_1"/>
<dbReference type="InParanoid" id="Q07139"/>
<dbReference type="OMA" id="PIYDVHK"/>
<dbReference type="OrthoDB" id="9997817at2759"/>
<dbReference type="PhylomeDB" id="Q07139"/>
<dbReference type="TreeFam" id="TF101161"/>
<dbReference type="Reactome" id="R-MMU-193648">
    <property type="pathway name" value="NRAGE signals death through JNK"/>
</dbReference>
<dbReference type="Reactome" id="R-MMU-416482">
    <property type="pathway name" value="G alpha (12/13) signalling events"/>
</dbReference>
<dbReference type="Reactome" id="R-MMU-8980692">
    <property type="pathway name" value="RHOA GTPase cycle"/>
</dbReference>
<dbReference type="Reactome" id="R-MMU-9013026">
    <property type="pathway name" value="RHOB GTPase cycle"/>
</dbReference>
<dbReference type="Reactome" id="R-MMU-9013148">
    <property type="pathway name" value="CDC42 GTPase cycle"/>
</dbReference>
<dbReference type="Reactome" id="R-MMU-9013149">
    <property type="pathway name" value="RAC1 GTPase cycle"/>
</dbReference>
<dbReference type="BioGRID-ORCS" id="13605">
    <property type="hits" value="25 hits in 78 CRISPR screens"/>
</dbReference>
<dbReference type="ChiTaRS" id="Ect2">
    <property type="organism name" value="mouse"/>
</dbReference>
<dbReference type="EvolutionaryTrace" id="Q07139"/>
<dbReference type="PRO" id="PR:Q07139"/>
<dbReference type="Proteomes" id="UP000000589">
    <property type="component" value="Chromosome 3"/>
</dbReference>
<dbReference type="RNAct" id="Q07139">
    <property type="molecule type" value="protein"/>
</dbReference>
<dbReference type="Bgee" id="ENSMUSG00000027699">
    <property type="expression patterns" value="Expressed in medial ganglionic eminence and 193 other cell types or tissues"/>
</dbReference>
<dbReference type="ExpressionAtlas" id="Q07139">
    <property type="expression patterns" value="baseline and differential"/>
</dbReference>
<dbReference type="GO" id="GO:0005923">
    <property type="term" value="C:bicellular tight junction"/>
    <property type="evidence" value="ECO:0000250"/>
    <property type="project" value="UniProtKB"/>
</dbReference>
<dbReference type="GO" id="GO:0005911">
    <property type="term" value="C:cell-cell junction"/>
    <property type="evidence" value="ECO:0000250"/>
    <property type="project" value="UniProtKB"/>
</dbReference>
<dbReference type="GO" id="GO:0097149">
    <property type="term" value="C:centralspindlin complex"/>
    <property type="evidence" value="ECO:0000250"/>
    <property type="project" value="UniProtKB"/>
</dbReference>
<dbReference type="GO" id="GO:0032154">
    <property type="term" value="C:cleavage furrow"/>
    <property type="evidence" value="ECO:0000250"/>
    <property type="project" value="UniProtKB"/>
</dbReference>
<dbReference type="GO" id="GO:0005737">
    <property type="term" value="C:cytoplasm"/>
    <property type="evidence" value="ECO:0000314"/>
    <property type="project" value="UniProtKB"/>
</dbReference>
<dbReference type="GO" id="GO:0005829">
    <property type="term" value="C:cytosol"/>
    <property type="evidence" value="ECO:0007669"/>
    <property type="project" value="Ensembl"/>
</dbReference>
<dbReference type="GO" id="GO:0030496">
    <property type="term" value="C:midbody"/>
    <property type="evidence" value="ECO:0000250"/>
    <property type="project" value="UniProtKB"/>
</dbReference>
<dbReference type="GO" id="GO:0072686">
    <property type="term" value="C:mitotic spindle"/>
    <property type="evidence" value="ECO:0000250"/>
    <property type="project" value="UniProtKB"/>
</dbReference>
<dbReference type="GO" id="GO:0016604">
    <property type="term" value="C:nuclear body"/>
    <property type="evidence" value="ECO:0007669"/>
    <property type="project" value="Ensembl"/>
</dbReference>
<dbReference type="GO" id="GO:0005634">
    <property type="term" value="C:nucleus"/>
    <property type="evidence" value="ECO:0000314"/>
    <property type="project" value="UniProtKB"/>
</dbReference>
<dbReference type="GO" id="GO:0005096">
    <property type="term" value="F:GTPase activator activity"/>
    <property type="evidence" value="ECO:0000250"/>
    <property type="project" value="UniProtKB"/>
</dbReference>
<dbReference type="GO" id="GO:0005085">
    <property type="term" value="F:guanyl-nucleotide exchange factor activity"/>
    <property type="evidence" value="ECO:0007669"/>
    <property type="project" value="UniProtKB-KW"/>
</dbReference>
<dbReference type="GO" id="GO:0042803">
    <property type="term" value="F:protein homodimerization activity"/>
    <property type="evidence" value="ECO:0000250"/>
    <property type="project" value="UniProtKB"/>
</dbReference>
<dbReference type="GO" id="GO:0031267">
    <property type="term" value="F:small GTPase binding"/>
    <property type="evidence" value="ECO:0000353"/>
    <property type="project" value="MGI"/>
</dbReference>
<dbReference type="GO" id="GO:0090630">
    <property type="term" value="P:activation of GTPase activity"/>
    <property type="evidence" value="ECO:0000250"/>
    <property type="project" value="UniProtKB"/>
</dbReference>
<dbReference type="GO" id="GO:0032147">
    <property type="term" value="P:activation of protein kinase activity"/>
    <property type="evidence" value="ECO:0000250"/>
    <property type="project" value="UniProtKB"/>
</dbReference>
<dbReference type="GO" id="GO:0070830">
    <property type="term" value="P:bicellular tight junction assembly"/>
    <property type="evidence" value="ECO:0000250"/>
    <property type="project" value="UniProtKB"/>
</dbReference>
<dbReference type="GO" id="GO:0030154">
    <property type="term" value="P:cell differentiation"/>
    <property type="evidence" value="ECO:0007669"/>
    <property type="project" value="UniProtKB-KW"/>
</dbReference>
<dbReference type="GO" id="GO:0000902">
    <property type="term" value="P:cell morphogenesis"/>
    <property type="evidence" value="ECO:0000314"/>
    <property type="project" value="MGI"/>
</dbReference>
<dbReference type="GO" id="GO:0071277">
    <property type="term" value="P:cellular response to calcium ion"/>
    <property type="evidence" value="ECO:0000250"/>
    <property type="project" value="UniProtKB"/>
</dbReference>
<dbReference type="GO" id="GO:0070301">
    <property type="term" value="P:cellular response to hydrogen peroxide"/>
    <property type="evidence" value="ECO:0000250"/>
    <property type="project" value="UniProtKB"/>
</dbReference>
<dbReference type="GO" id="GO:0071479">
    <property type="term" value="P:cellular response to ionizing radiation"/>
    <property type="evidence" value="ECO:0000250"/>
    <property type="project" value="UniProtKB"/>
</dbReference>
<dbReference type="GO" id="GO:0035556">
    <property type="term" value="P:intracellular signal transduction"/>
    <property type="evidence" value="ECO:0007669"/>
    <property type="project" value="InterPro"/>
</dbReference>
<dbReference type="GO" id="GO:0000281">
    <property type="term" value="P:mitotic cytokinesis"/>
    <property type="evidence" value="ECO:0000250"/>
    <property type="project" value="UniProtKB"/>
</dbReference>
<dbReference type="GO" id="GO:0007399">
    <property type="term" value="P:nervous system development"/>
    <property type="evidence" value="ECO:0007669"/>
    <property type="project" value="UniProtKB-KW"/>
</dbReference>
<dbReference type="GO" id="GO:0043065">
    <property type="term" value="P:positive regulation of apoptotic process"/>
    <property type="evidence" value="ECO:0000250"/>
    <property type="project" value="UniProtKB"/>
</dbReference>
<dbReference type="GO" id="GO:0032467">
    <property type="term" value="P:positive regulation of cytokinesis"/>
    <property type="evidence" value="ECO:0000250"/>
    <property type="project" value="UniProtKB"/>
</dbReference>
<dbReference type="GO" id="GO:0043547">
    <property type="term" value="P:positive regulation of GTPase activity"/>
    <property type="evidence" value="ECO:0000250"/>
    <property type="project" value="UniProtKB"/>
</dbReference>
<dbReference type="GO" id="GO:1903438">
    <property type="term" value="P:positive regulation of mitotic cytokinetic process"/>
    <property type="evidence" value="ECO:0007669"/>
    <property type="project" value="Ensembl"/>
</dbReference>
<dbReference type="GO" id="GO:0045666">
    <property type="term" value="P:positive regulation of neuron differentiation"/>
    <property type="evidence" value="ECO:0000315"/>
    <property type="project" value="UniProtKB"/>
</dbReference>
<dbReference type="GO" id="GO:0042307">
    <property type="term" value="P:positive regulation of protein import into nucleus"/>
    <property type="evidence" value="ECO:0000314"/>
    <property type="project" value="UniProtKB"/>
</dbReference>
<dbReference type="GO" id="GO:0051260">
    <property type="term" value="P:protein homooligomerization"/>
    <property type="evidence" value="ECO:0000250"/>
    <property type="project" value="UniProtKB"/>
</dbReference>
<dbReference type="GO" id="GO:0015031">
    <property type="term" value="P:protein transport"/>
    <property type="evidence" value="ECO:0007669"/>
    <property type="project" value="UniProtKB-KW"/>
</dbReference>
<dbReference type="GO" id="GO:0051988">
    <property type="term" value="P:regulation of attachment of spindle microtubules to kinetochore"/>
    <property type="evidence" value="ECO:0000250"/>
    <property type="project" value="UniProtKB"/>
</dbReference>
<dbReference type="GO" id="GO:2000431">
    <property type="term" value="P:regulation of cytokinesis, actomyosin contractile ring assembly"/>
    <property type="evidence" value="ECO:0007669"/>
    <property type="project" value="InterPro"/>
</dbReference>
<dbReference type="GO" id="GO:0045859">
    <property type="term" value="P:regulation of protein kinase activity"/>
    <property type="evidence" value="ECO:0000250"/>
    <property type="project" value="UniProtKB"/>
</dbReference>
<dbReference type="CDD" id="cd17733">
    <property type="entry name" value="BRCT_Ect2_rpt1"/>
    <property type="match status" value="1"/>
</dbReference>
<dbReference type="CDD" id="cd17732">
    <property type="entry name" value="BRCT_Ect2_rpt2"/>
    <property type="match status" value="1"/>
</dbReference>
<dbReference type="CDD" id="cd01229">
    <property type="entry name" value="PH_Ect2"/>
    <property type="match status" value="1"/>
</dbReference>
<dbReference type="CDD" id="cd00160">
    <property type="entry name" value="RhoGEF"/>
    <property type="match status" value="1"/>
</dbReference>
<dbReference type="FunFam" id="1.20.900.10:FF:000022">
    <property type="entry name" value="protein ECT2 isoform X1"/>
    <property type="match status" value="1"/>
</dbReference>
<dbReference type="FunFam" id="3.40.50.10190:FF:000015">
    <property type="entry name" value="protein ECT2 isoform X1"/>
    <property type="match status" value="1"/>
</dbReference>
<dbReference type="FunFam" id="2.30.29.30:FF:000162">
    <property type="entry name" value="protein ECT2 isoform X2"/>
    <property type="match status" value="1"/>
</dbReference>
<dbReference type="FunFam" id="3.40.50.10190:FF:000016">
    <property type="entry name" value="protein ECT2 isoform X3"/>
    <property type="match status" value="1"/>
</dbReference>
<dbReference type="Gene3D" id="3.40.50.10190">
    <property type="entry name" value="BRCT domain"/>
    <property type="match status" value="3"/>
</dbReference>
<dbReference type="Gene3D" id="1.20.900.10">
    <property type="entry name" value="Dbl homology (DH) domain"/>
    <property type="match status" value="1"/>
</dbReference>
<dbReference type="Gene3D" id="2.30.29.30">
    <property type="entry name" value="Pleckstrin-homology domain (PH domain)/Phosphotyrosine-binding domain (PTB)"/>
    <property type="match status" value="1"/>
</dbReference>
<dbReference type="InterPro" id="IPR001357">
    <property type="entry name" value="BRCT_dom"/>
</dbReference>
<dbReference type="InterPro" id="IPR036420">
    <property type="entry name" value="BRCT_dom_sf"/>
</dbReference>
<dbReference type="InterPro" id="IPR035899">
    <property type="entry name" value="DBL_dom_sf"/>
</dbReference>
<dbReference type="InterPro" id="IPR000219">
    <property type="entry name" value="DH_dom"/>
</dbReference>
<dbReference type="InterPro" id="IPR026817">
    <property type="entry name" value="Ect2"/>
</dbReference>
<dbReference type="InterPro" id="IPR049396">
    <property type="entry name" value="ECT2_BRCT0"/>
</dbReference>
<dbReference type="InterPro" id="IPR049395">
    <property type="entry name" value="ECT2_PH"/>
</dbReference>
<dbReference type="InterPro" id="IPR001331">
    <property type="entry name" value="GDS_CDC24_CS"/>
</dbReference>
<dbReference type="InterPro" id="IPR011993">
    <property type="entry name" value="PH-like_dom_sf"/>
</dbReference>
<dbReference type="PANTHER" id="PTHR16777">
    <property type="entry name" value="PROTEIN ECT2"/>
    <property type="match status" value="1"/>
</dbReference>
<dbReference type="PANTHER" id="PTHR16777:SF2">
    <property type="entry name" value="PROTEIN ECT2"/>
    <property type="match status" value="1"/>
</dbReference>
<dbReference type="Pfam" id="PF00533">
    <property type="entry name" value="BRCT"/>
    <property type="match status" value="1"/>
</dbReference>
<dbReference type="Pfam" id="PF21243">
    <property type="entry name" value="ECT2_BRCT0"/>
    <property type="match status" value="1"/>
</dbReference>
<dbReference type="Pfam" id="PF21242">
    <property type="entry name" value="ECT2_PH"/>
    <property type="match status" value="1"/>
</dbReference>
<dbReference type="Pfam" id="PF12738">
    <property type="entry name" value="PTCB-BRCT"/>
    <property type="match status" value="1"/>
</dbReference>
<dbReference type="Pfam" id="PF00621">
    <property type="entry name" value="RhoGEF"/>
    <property type="match status" value="1"/>
</dbReference>
<dbReference type="SMART" id="SM00292">
    <property type="entry name" value="BRCT"/>
    <property type="match status" value="2"/>
</dbReference>
<dbReference type="SMART" id="SM00325">
    <property type="entry name" value="RhoGEF"/>
    <property type="match status" value="1"/>
</dbReference>
<dbReference type="SUPFAM" id="SSF52113">
    <property type="entry name" value="BRCT domain"/>
    <property type="match status" value="2"/>
</dbReference>
<dbReference type="SUPFAM" id="SSF48065">
    <property type="entry name" value="DBL homology domain (DH-domain)"/>
    <property type="match status" value="1"/>
</dbReference>
<dbReference type="SUPFAM" id="SSF50729">
    <property type="entry name" value="PH domain-like"/>
    <property type="match status" value="1"/>
</dbReference>
<dbReference type="PROSITE" id="PS50172">
    <property type="entry name" value="BRCT"/>
    <property type="match status" value="2"/>
</dbReference>
<dbReference type="PROSITE" id="PS00741">
    <property type="entry name" value="DH_1"/>
    <property type="match status" value="1"/>
</dbReference>
<dbReference type="PROSITE" id="PS50010">
    <property type="entry name" value="DH_2"/>
    <property type="match status" value="1"/>
</dbReference>
<comment type="function">
    <text evidence="6 7">Guanine nucleotide exchange factor (GEF) that catalyzes the exchange of GDP for GTP. Promotes guanine nucleotide exchange on the Rho family members of small GTPases, like RHOA, RHOC, RAC1 and CDC42. Required for signal transduction pathways involved in the regulation of cytokinesis. Component of the centralspindlin complex that serves as a microtubule-dependent and Rho-mediated signaling required for the myosin contractile ring formation during the cell cycle cytokinesis. Regulates the translocation of RHOA from the central spindle to the equatorial region. Plays a role in the control of mitotic spindle assembly; regulates the activation of CDC42 in metaphase for the process of spindle fibers attachment to kinetochores before chromosome congression. Involved in the regulation of epithelial cell polarity; participates in the formation of epithelial tight junctions in a polarity complex PARD3-PARD6-protein kinase PRKCQ-dependent manner. Plays a role in the regulation of neurite outgrowth. Inhibits phenobarbital (PB)-induced NR1I3 nuclear translocation. Stimulates the activity of RAC1 through its association with the oncogenic PARD6A-PRKCI complex in cancer cells, thereby acting to coordinately drive tumor cell proliferation and invasion. Also stimulates genotoxic stress-induced RHOB activity in breast cancer cells leading to their cell death.</text>
</comment>
<comment type="activity regulation">
    <text evidence="2">Autoinhibited by the C-terminal PH domain which folds back and binds to the surface of the DH domain, blocking binding of RHOA to the catalytic center of the DH domain. The 2nd BRCT domain is also involved in inhibition, probably by helping to impede RHOA binding. Allosterically activated by binding of activated GTP-bound RHOA to the PH domain which stimulates the release of PH inhibition and promotes the binding of substrate RHOA to the catalytic center. Binding of phosphorylated RACGAP1 to the N-terminal BRCT domain-containing region also releases autoinhibition.</text>
</comment>
<comment type="subunit">
    <text evidence="2 6">Homodimer (By similarity). Homooligomer (By similarity). Found in the centralspindlin complex (By similarity). Interacts with NR1I3 (PubMed:17904126). Interacts (Thr-359 phosphorylated form) with PARD6A; the interaction is observed in cancer cells (By similarity). Interacts (Thr-359 phosphorylated form) with PRKCI; the interaction is observed in cancer cells (By similarity). Interacts with PKP4; the interaction is observed at the midbody (By similarity). Interacts with RACGAP1; the interaction is direct, occurs in a microtubule-dependent manner, occurs at anaphase and during cytokinesis, is inhibited in metaphase by phosphorylation of ECT2 on Thr-373 and is stimulated in early anaphase by dephosphorylation of ECT2 probably on Thr-373 through CDK1 activity (By similarity). Interacts with PLK1; the interaction is stimulated upon its phosphorylation on Thr-444 (By similarity). Interacts with RHOA; the interaction results in allosteric activation of ECT2 (By similarity). Interacts with KIF23, PARD3, PARD6B and PRKCQ (By similarity). Interacts with NEDD9/HEF1 (By similarity).</text>
</comment>
<comment type="subcellular location">
    <subcellularLocation>
        <location evidence="6">Nucleus</location>
    </subcellularLocation>
    <subcellularLocation>
        <location evidence="6">Cytoplasm</location>
    </subcellularLocation>
    <subcellularLocation>
        <location evidence="2">Cytoplasm</location>
        <location evidence="2">Cytoskeleton</location>
        <location evidence="2">Spindle</location>
    </subcellularLocation>
    <subcellularLocation>
        <location evidence="2">Cleavage furrow</location>
    </subcellularLocation>
    <subcellularLocation>
        <location evidence="2">Midbody</location>
    </subcellularLocation>
    <subcellularLocation>
        <location evidence="2">Cell junction</location>
    </subcellularLocation>
    <subcellularLocation>
        <location evidence="2">Cell junction</location>
        <location evidence="2">Tight junction</location>
    </subcellularLocation>
    <text evidence="2">Sequestered within the nucleus during interphase (By similarity). Dispersed throughout the cytoplasm upon breakdown of the nuclear envelope during mitosis (By similarity). Colocalizes with the centralspindlin complex to the mitotic spindles during anaphase/metaphase, the cleavage furrow during telophase and at the midbody at the end of cytokinesis (By similarity). Colocalized with RhoA at the midbody (By similarity). Its subcellular localization to tight junction is increased by calcium (By similarity).</text>
</comment>
<comment type="alternative products">
    <event type="alternative splicing"/>
    <isoform>
        <id>Q07139-1</id>
        <name>1</name>
        <sequence type="displayed"/>
    </isoform>
    <isoform>
        <id>Q07139-2</id>
        <name>2</name>
        <sequence type="described" ref="VSP_041981"/>
    </isoform>
    <isoform>
        <id>Q07139-3</id>
        <name>3</name>
        <sequence type="described" ref="VSP_041979 VSP_041980"/>
    </isoform>
</comment>
<comment type="tissue specificity">
    <text evidence="7">Highest expression in testis. Also detectable in brain, kidney, liver and spleen.</text>
</comment>
<comment type="developmental stage">
    <text evidence="7">Expressed in the embryo at 16 dpc.</text>
</comment>
<comment type="induction">
    <text evidence="6">Up-regulated by phenobarbital in the nucleus and cytoplasm of the liver.</text>
</comment>
<comment type="domain">
    <text evidence="1">The BRCT domain 1 and 2 are required for the intramolecular interaction, but not for the intermolecular oligomerization. The BRCT domains negatively inhibit its GEF activity in interphase cells. The same BRCT domains may act as a positive regulatory motif for the completion of cytokinesis after the breakdown of nuclear membrane during mitosis (By similarity).</text>
</comment>
<comment type="PTM">
    <text evidence="1">Phosphorylated by PLK1 in vitro. Hyperphosphorylated during the G2 phase of the cell cycle. Phosphorylation at Thr-373 occurs during the G2/M phase, relieves its auto-inhibition status and stimulates its GEF activity. Phosphorylation at Thr-444 in G2/M phase is required for subsequent binding with PLK1 and Rho exchange activation. Dephosphorylated at the time of cytokinesis. Phosphorylation at Thr-359 is required for its transformation activity in cancer cells (By similarity).</text>
</comment>
<comment type="miscellaneous">
    <molecule>Isoform 3</molecule>
    <text evidence="12">May be produced at very low levels due to a premature stop codon in the mRNA, leading to nonsense-mediated mRNA decay.</text>
</comment>
<comment type="sequence caution" evidence="12">
    <conflict type="miscellaneous discrepancy">
        <sequence resource="EMBL-CDS" id="AAA37536"/>
    </conflict>
    <text>Erroneous CDS prediction.</text>
</comment>
<protein>
    <recommendedName>
        <fullName>Protein ECT2</fullName>
    </recommendedName>
    <alternativeName>
        <fullName>Epithelial cell-transforming sequence 2 oncogene</fullName>
    </alternativeName>
</protein>
<name>ECT2_MOUSE</name>
<sequence length="913" mass="103131">MADDSVLPSPSEITSLADSSVFDSKVAEMSKENLCLASTSNVDEEMPQVEARVIMVQDAGKQEELLKALKTIKIMEVPVIKIKESCPGKSEEKLIKSIINMEMKVPCVKMDSMEEFESLDSPEFENIFVVTDFQNSVFNDLYKADCRIVGPPVILNCAQRGEPLPFSCRPLYCTSMLNLVLCFTGFRKKEELVKLVTLVHHMGGVIRKECNSKVTHLVANCTQGEKFRVAVSLGTPIMKPEWIYKAWERRNEQCFCAAVDDFRNEFKVPPFQDCILSFLGFSDEEKHSMEEMTEMQGGSYLPVGDERCTHLIVEENTVKDLPFEPSKKLFVVKQEWFWGSIQMDARAGETMYLYEKANTPELKKSVSLLSLSTPNSNRKRRRLKETLAQLSRETDLSPFPPRKRPSAEHSLSIGSLLDISNTPESSIHYGETPKSCAKSSRSSTPVPPKQSARWQVAKELYQTESNYVNILATIIQLFQVPLEEEGQRGGPILAPEEIKTIFGSIPDIFDVHMKIKDDLEDLIANWDESRSIGDIFLKYAKDLVKTYPPFVNFFEMSKEMIIKCEKQKPRFHAFLKINQAKPECGRQSLVELLIRPVQRLPSVALLLNDLKKHTADENPDKSTLEKAIGSLKEVMTHINEDKRKTEAQKQIFDVVYEVDGCPANLLSSHRSLVQRVETVSLGEHPCDRGEQVTLFLFNDCLEIARKRHKVIGTFRSPHDRTRPPASLKHIHLMPLSQIKKVLDIRETEDCHNAFALLVRPPTEQANVLLSFQMTSEELPKESWLKMLCRHVANTICKADAENLMYVADPESFEVNTKDMDSTLSRASRAIKKTSKKVTRAFSFSKTPKRALRMALSSSHSSEGRSPPSSGKLAVSRLSSTSSLAGIPSPSLVSLPSFFERRSHTLSRSTTHLI</sequence>
<accession>Q07139</accession>
<accession>Q3TZP2</accession>
<accession>Q5DTR8</accession>
<accession>Q80VE4</accession>
<accession>Q8CIH2</accession>
<accession>Q8K2A0</accession>
<accession>Q8R3E2</accession>
<reference key="1">
    <citation type="journal article" date="1993" name="Nature">
        <title>Oncogene ect2 is related to regulators of small GTP-binding proteins.</title>
        <authorList>
            <person name="Miki T."/>
            <person name="Smith C.L."/>
            <person name="Long J.E."/>
            <person name="Eva A."/>
            <person name="Fleming T.P."/>
        </authorList>
    </citation>
    <scope>NUCLEOTIDE SEQUENCE [MRNA] (ISOFORM 3)</scope>
</reference>
<reference key="2">
    <citation type="journal article" date="1993" name="Nature">
        <authorList>
            <person name="Miki T."/>
            <person name="Smith C.L."/>
            <person name="Long J.E."/>
            <person name="Eva A."/>
            <person name="Fleming T.P."/>
        </authorList>
    </citation>
    <scope>ERRATUM OF PUBMED:8464478</scope>
</reference>
<reference key="3">
    <citation type="journal article" date="2005" name="Science">
        <title>The transcriptional landscape of the mammalian genome.</title>
        <authorList>
            <person name="Carninci P."/>
            <person name="Kasukawa T."/>
            <person name="Katayama S."/>
            <person name="Gough J."/>
            <person name="Frith M.C."/>
            <person name="Maeda N."/>
            <person name="Oyama R."/>
            <person name="Ravasi T."/>
            <person name="Lenhard B."/>
            <person name="Wells C."/>
            <person name="Kodzius R."/>
            <person name="Shimokawa K."/>
            <person name="Bajic V.B."/>
            <person name="Brenner S.E."/>
            <person name="Batalov S."/>
            <person name="Forrest A.R."/>
            <person name="Zavolan M."/>
            <person name="Davis M.J."/>
            <person name="Wilming L.G."/>
            <person name="Aidinis V."/>
            <person name="Allen J.E."/>
            <person name="Ambesi-Impiombato A."/>
            <person name="Apweiler R."/>
            <person name="Aturaliya R.N."/>
            <person name="Bailey T.L."/>
            <person name="Bansal M."/>
            <person name="Baxter L."/>
            <person name="Beisel K.W."/>
            <person name="Bersano T."/>
            <person name="Bono H."/>
            <person name="Chalk A.M."/>
            <person name="Chiu K.P."/>
            <person name="Choudhary V."/>
            <person name="Christoffels A."/>
            <person name="Clutterbuck D.R."/>
            <person name="Crowe M.L."/>
            <person name="Dalla E."/>
            <person name="Dalrymple B.P."/>
            <person name="de Bono B."/>
            <person name="Della Gatta G."/>
            <person name="di Bernardo D."/>
            <person name="Down T."/>
            <person name="Engstrom P."/>
            <person name="Fagiolini M."/>
            <person name="Faulkner G."/>
            <person name="Fletcher C.F."/>
            <person name="Fukushima T."/>
            <person name="Furuno M."/>
            <person name="Futaki S."/>
            <person name="Gariboldi M."/>
            <person name="Georgii-Hemming P."/>
            <person name="Gingeras T.R."/>
            <person name="Gojobori T."/>
            <person name="Green R.E."/>
            <person name="Gustincich S."/>
            <person name="Harbers M."/>
            <person name="Hayashi Y."/>
            <person name="Hensch T.K."/>
            <person name="Hirokawa N."/>
            <person name="Hill D."/>
            <person name="Huminiecki L."/>
            <person name="Iacono M."/>
            <person name="Ikeo K."/>
            <person name="Iwama A."/>
            <person name="Ishikawa T."/>
            <person name="Jakt M."/>
            <person name="Kanapin A."/>
            <person name="Katoh M."/>
            <person name="Kawasawa Y."/>
            <person name="Kelso J."/>
            <person name="Kitamura H."/>
            <person name="Kitano H."/>
            <person name="Kollias G."/>
            <person name="Krishnan S.P."/>
            <person name="Kruger A."/>
            <person name="Kummerfeld S.K."/>
            <person name="Kurochkin I.V."/>
            <person name="Lareau L.F."/>
            <person name="Lazarevic D."/>
            <person name="Lipovich L."/>
            <person name="Liu J."/>
            <person name="Liuni S."/>
            <person name="McWilliam S."/>
            <person name="Madan Babu M."/>
            <person name="Madera M."/>
            <person name="Marchionni L."/>
            <person name="Matsuda H."/>
            <person name="Matsuzawa S."/>
            <person name="Miki H."/>
            <person name="Mignone F."/>
            <person name="Miyake S."/>
            <person name="Morris K."/>
            <person name="Mottagui-Tabar S."/>
            <person name="Mulder N."/>
            <person name="Nakano N."/>
            <person name="Nakauchi H."/>
            <person name="Ng P."/>
            <person name="Nilsson R."/>
            <person name="Nishiguchi S."/>
            <person name="Nishikawa S."/>
            <person name="Nori F."/>
            <person name="Ohara O."/>
            <person name="Okazaki Y."/>
            <person name="Orlando V."/>
            <person name="Pang K.C."/>
            <person name="Pavan W.J."/>
            <person name="Pavesi G."/>
            <person name="Pesole G."/>
            <person name="Petrovsky N."/>
            <person name="Piazza S."/>
            <person name="Reed J."/>
            <person name="Reid J.F."/>
            <person name="Ring B.Z."/>
            <person name="Ringwald M."/>
            <person name="Rost B."/>
            <person name="Ruan Y."/>
            <person name="Salzberg S.L."/>
            <person name="Sandelin A."/>
            <person name="Schneider C."/>
            <person name="Schoenbach C."/>
            <person name="Sekiguchi K."/>
            <person name="Semple C.A."/>
            <person name="Seno S."/>
            <person name="Sessa L."/>
            <person name="Sheng Y."/>
            <person name="Shibata Y."/>
            <person name="Shimada H."/>
            <person name="Shimada K."/>
            <person name="Silva D."/>
            <person name="Sinclair B."/>
            <person name="Sperling S."/>
            <person name="Stupka E."/>
            <person name="Sugiura K."/>
            <person name="Sultana R."/>
            <person name="Takenaka Y."/>
            <person name="Taki K."/>
            <person name="Tammoja K."/>
            <person name="Tan S.L."/>
            <person name="Tang S."/>
            <person name="Taylor M.S."/>
            <person name="Tegner J."/>
            <person name="Teichmann S.A."/>
            <person name="Ueda H.R."/>
            <person name="van Nimwegen E."/>
            <person name="Verardo R."/>
            <person name="Wei C.L."/>
            <person name="Yagi K."/>
            <person name="Yamanishi H."/>
            <person name="Zabarovsky E."/>
            <person name="Zhu S."/>
            <person name="Zimmer A."/>
            <person name="Hide W."/>
            <person name="Bult C."/>
            <person name="Grimmond S.M."/>
            <person name="Teasdale R.D."/>
            <person name="Liu E.T."/>
            <person name="Brusic V."/>
            <person name="Quackenbush J."/>
            <person name="Wahlestedt C."/>
            <person name="Mattick J.S."/>
            <person name="Hume D.A."/>
            <person name="Kai C."/>
            <person name="Sasaki D."/>
            <person name="Tomaru Y."/>
            <person name="Fukuda S."/>
            <person name="Kanamori-Katayama M."/>
            <person name="Suzuki M."/>
            <person name="Aoki J."/>
            <person name="Arakawa T."/>
            <person name="Iida J."/>
            <person name="Imamura K."/>
            <person name="Itoh M."/>
            <person name="Kato T."/>
            <person name="Kawaji H."/>
            <person name="Kawagashira N."/>
            <person name="Kawashima T."/>
            <person name="Kojima M."/>
            <person name="Kondo S."/>
            <person name="Konno H."/>
            <person name="Nakano K."/>
            <person name="Ninomiya N."/>
            <person name="Nishio T."/>
            <person name="Okada M."/>
            <person name="Plessy C."/>
            <person name="Shibata K."/>
            <person name="Shiraki T."/>
            <person name="Suzuki S."/>
            <person name="Tagami M."/>
            <person name="Waki K."/>
            <person name="Watahiki A."/>
            <person name="Okamura-Oho Y."/>
            <person name="Suzuki H."/>
            <person name="Kawai J."/>
            <person name="Hayashizaki Y."/>
        </authorList>
    </citation>
    <scope>NUCLEOTIDE SEQUENCE [LARGE SCALE MRNA] (ISOFORM 2)</scope>
    <source>
        <strain>C57BL/6J</strain>
        <tissue>Embryo</tissue>
    </source>
</reference>
<reference key="4">
    <citation type="submission" date="2005-02" db="EMBL/GenBank/DDBJ databases">
        <title>Prediction of the coding sequences of mouse homologues of KIAA gene. The complete nucleotide sequences of mouse KIAA-homologous cDNAs identified by screening of terminal sequences of cDNA clones randomly sampled from size-fractionated libraries.</title>
        <authorList>
            <person name="Okazaki N."/>
            <person name="Kikuno R.F."/>
            <person name="Ohara R."/>
            <person name="Inamoto S."/>
            <person name="Nagase T."/>
            <person name="Ohara O."/>
            <person name="Koga H."/>
        </authorList>
    </citation>
    <scope>NUCLEOTIDE SEQUENCE [LARGE SCALE MRNA] (ISOFORM 2)</scope>
</reference>
<reference key="5">
    <citation type="journal article" date="2009" name="PLoS Biol.">
        <title>Lineage-specific biology revealed by a finished genome assembly of the mouse.</title>
        <authorList>
            <person name="Church D.M."/>
            <person name="Goodstadt L."/>
            <person name="Hillier L.W."/>
            <person name="Zody M.C."/>
            <person name="Goldstein S."/>
            <person name="She X."/>
            <person name="Bult C.J."/>
            <person name="Agarwala R."/>
            <person name="Cherry J.L."/>
            <person name="DiCuccio M."/>
            <person name="Hlavina W."/>
            <person name="Kapustin Y."/>
            <person name="Meric P."/>
            <person name="Maglott D."/>
            <person name="Birtle Z."/>
            <person name="Marques A.C."/>
            <person name="Graves T."/>
            <person name="Zhou S."/>
            <person name="Teague B."/>
            <person name="Potamousis K."/>
            <person name="Churas C."/>
            <person name="Place M."/>
            <person name="Herschleb J."/>
            <person name="Runnheim R."/>
            <person name="Forrest D."/>
            <person name="Amos-Landgraf J."/>
            <person name="Schwartz D.C."/>
            <person name="Cheng Z."/>
            <person name="Lindblad-Toh K."/>
            <person name="Eichler E.E."/>
            <person name="Ponting C.P."/>
        </authorList>
    </citation>
    <scope>NUCLEOTIDE SEQUENCE [LARGE SCALE GENOMIC DNA]</scope>
    <source>
        <strain>C57BL/6J</strain>
    </source>
</reference>
<reference key="6">
    <citation type="submission" date="2005-07" db="EMBL/GenBank/DDBJ databases">
        <authorList>
            <person name="Mural R.J."/>
            <person name="Adams M.D."/>
            <person name="Myers E.W."/>
            <person name="Smith H.O."/>
            <person name="Venter J.C."/>
        </authorList>
    </citation>
    <scope>NUCLEOTIDE SEQUENCE [LARGE SCALE GENOMIC DNA]</scope>
</reference>
<reference key="7">
    <citation type="journal article" date="2004" name="Genome Res.">
        <title>The status, quality, and expansion of the NIH full-length cDNA project: the Mammalian Gene Collection (MGC).</title>
        <authorList>
            <consortium name="The MGC Project Team"/>
        </authorList>
    </citation>
    <scope>NUCLEOTIDE SEQUENCE [LARGE SCALE MRNA] (ISOFORMS 1 AND 2)</scope>
    <source>
        <strain>Czech II</strain>
        <strain>FVB/N</strain>
        <strain>FVB/N-3</strain>
        <tissue>Mammary tumor</tissue>
    </source>
</reference>
<reference key="8">
    <citation type="journal article" date="2007" name="FEBS Lett.">
        <title>Overexpression of the Rho-guanine nucleotide exchange factor ECT2 inhibits nuclear translocation of nuclear receptor CAR in the mouse liver.</title>
        <authorList>
            <person name="Hosseinpour F."/>
            <person name="Timsit Y."/>
            <person name="Koike C."/>
            <person name="Matsui K."/>
            <person name="Yamamoto Y."/>
            <person name="Moore R."/>
            <person name="Negishi M."/>
        </authorList>
    </citation>
    <scope>FUNCTION</scope>
    <scope>INTERACTION WITH NR1I3</scope>
    <scope>INDUCTION</scope>
    <scope>SUBCELLULAR LOCATION</scope>
</reference>
<reference key="9">
    <citation type="journal article" date="2010" name="Cell">
        <title>A tissue-specific atlas of mouse protein phosphorylation and expression.</title>
        <authorList>
            <person name="Huttlin E.L."/>
            <person name="Jedrychowski M.P."/>
            <person name="Elias J.E."/>
            <person name="Goswami T."/>
            <person name="Rad R."/>
            <person name="Beausoleil S.A."/>
            <person name="Villen J."/>
            <person name="Haas W."/>
            <person name="Sowa M.E."/>
            <person name="Gygi S.P."/>
        </authorList>
    </citation>
    <scope>PHOSPHORYLATION [LARGE SCALE ANALYSIS] AT THR-373 AND SER-376</scope>
    <scope>IDENTIFICATION BY MASS SPECTROMETRY [LARGE SCALE ANALYSIS]</scope>
    <source>
        <tissue>Spleen</tissue>
    </source>
</reference>
<reference key="10">
    <citation type="journal article" date="2011" name="Cell. Mol. Neurobiol.">
        <title>Ect2, an ortholog of Drosophila's pebble, negatively regulates neurite outgrowth in neuroblastoma x glioma hybrid NG108-15 cells.</title>
        <authorList>
            <person name="Tsuji T."/>
            <person name="Higashida C."/>
            <person name="Yoshida Y."/>
            <person name="Islam M.S."/>
            <person name="Dohmoto M."/>
            <person name="Koizumi K."/>
            <person name="Higashida H."/>
        </authorList>
    </citation>
    <scope>FUNCTION</scope>
    <scope>DEVELOPMENTAL STAGE</scope>
    <scope>TISSUE SPECIFICITY</scope>
</reference>
<reference key="11">
    <citation type="submission" date="2005-11" db="PDB data bank">
        <title>Solution structure of the second BRCT domain of epithelial cell transforming 2.</title>
        <authorList>
            <consortium name="RIKEN structural genomics initiative (RSGI)"/>
        </authorList>
    </citation>
    <scope>STRUCTURE BY NMR OF 266-361</scope>
</reference>
<organism>
    <name type="scientific">Mus musculus</name>
    <name type="common">Mouse</name>
    <dbReference type="NCBI Taxonomy" id="10090"/>
    <lineage>
        <taxon>Eukaryota</taxon>
        <taxon>Metazoa</taxon>
        <taxon>Chordata</taxon>
        <taxon>Craniata</taxon>
        <taxon>Vertebrata</taxon>
        <taxon>Euteleostomi</taxon>
        <taxon>Mammalia</taxon>
        <taxon>Eutheria</taxon>
        <taxon>Euarchontoglires</taxon>
        <taxon>Glires</taxon>
        <taxon>Rodentia</taxon>
        <taxon>Myomorpha</taxon>
        <taxon>Muroidea</taxon>
        <taxon>Muridae</taxon>
        <taxon>Murinae</taxon>
        <taxon>Mus</taxon>
        <taxon>Mus</taxon>
    </lineage>
</organism>
<gene>
    <name type="primary">Ect2</name>
    <name type="synonym">mKIAA4037</name>
</gene>